<protein>
    <recommendedName>
        <fullName evidence="1">Protein-methionine-sulfoxide reductase heme-binding subunit MsrQ</fullName>
    </recommendedName>
    <alternativeName>
        <fullName evidence="1">Flavocytochrome MsrQ</fullName>
    </alternativeName>
</protein>
<name>MSRQ_XANOM</name>
<keyword id="KW-0997">Cell inner membrane</keyword>
<keyword id="KW-1003">Cell membrane</keyword>
<keyword id="KW-0249">Electron transport</keyword>
<keyword id="KW-0285">Flavoprotein</keyword>
<keyword id="KW-0288">FMN</keyword>
<keyword id="KW-0349">Heme</keyword>
<keyword id="KW-0408">Iron</keyword>
<keyword id="KW-0472">Membrane</keyword>
<keyword id="KW-0479">Metal-binding</keyword>
<keyword id="KW-0812">Transmembrane</keyword>
<keyword id="KW-1133">Transmembrane helix</keyword>
<keyword id="KW-0813">Transport</keyword>
<sequence length="218" mass="24858">MAKTSTSVIVAKTLVHAAALAPIALLGWQFWQVWQSGSDALGADPVAEIEHRTGLWALRFLLITLAITPLRQLTGQAVLIRFRRMLGLYAFFYATVHLAAYLTLDLRGFWTQIFEEILKRPYITVGFAAWLLLMPLAITSTQGWMRRLKRNWGRVHMLIYPIGLLAVLHFWWLVKSDIREPALYAGILAVLLGWRAWKKLSARRTKARRSAPPQATPR</sequence>
<dbReference type="EMBL" id="AP008229">
    <property type="protein sequence ID" value="BAE69025.1"/>
    <property type="molecule type" value="Genomic_DNA"/>
</dbReference>
<dbReference type="RefSeq" id="WP_011408583.1">
    <property type="nucleotide sequence ID" value="NC_007705.1"/>
</dbReference>
<dbReference type="SMR" id="Q2P352"/>
<dbReference type="KEGG" id="xom:XOO2270"/>
<dbReference type="HOGENOM" id="CLU_080662_0_1_6"/>
<dbReference type="GO" id="GO:0005886">
    <property type="term" value="C:plasma membrane"/>
    <property type="evidence" value="ECO:0007669"/>
    <property type="project" value="UniProtKB-SubCell"/>
</dbReference>
<dbReference type="GO" id="GO:0009055">
    <property type="term" value="F:electron transfer activity"/>
    <property type="evidence" value="ECO:0007669"/>
    <property type="project" value="UniProtKB-UniRule"/>
</dbReference>
<dbReference type="GO" id="GO:0010181">
    <property type="term" value="F:FMN binding"/>
    <property type="evidence" value="ECO:0007669"/>
    <property type="project" value="UniProtKB-UniRule"/>
</dbReference>
<dbReference type="GO" id="GO:0020037">
    <property type="term" value="F:heme binding"/>
    <property type="evidence" value="ECO:0007669"/>
    <property type="project" value="UniProtKB-UniRule"/>
</dbReference>
<dbReference type="GO" id="GO:0046872">
    <property type="term" value="F:metal ion binding"/>
    <property type="evidence" value="ECO:0007669"/>
    <property type="project" value="UniProtKB-KW"/>
</dbReference>
<dbReference type="GO" id="GO:0016679">
    <property type="term" value="F:oxidoreductase activity, acting on diphenols and related substances as donors"/>
    <property type="evidence" value="ECO:0007669"/>
    <property type="project" value="TreeGrafter"/>
</dbReference>
<dbReference type="GO" id="GO:0030091">
    <property type="term" value="P:protein repair"/>
    <property type="evidence" value="ECO:0007669"/>
    <property type="project" value="UniProtKB-UniRule"/>
</dbReference>
<dbReference type="HAMAP" id="MF_01207">
    <property type="entry name" value="MsrQ"/>
    <property type="match status" value="1"/>
</dbReference>
<dbReference type="InterPro" id="IPR013130">
    <property type="entry name" value="Fe3_Rdtase_TM_dom"/>
</dbReference>
<dbReference type="InterPro" id="IPR022837">
    <property type="entry name" value="MsrQ-like"/>
</dbReference>
<dbReference type="NCBIfam" id="NF003835">
    <property type="entry name" value="PRK05419.2-2"/>
    <property type="match status" value="1"/>
</dbReference>
<dbReference type="PANTHER" id="PTHR36964">
    <property type="entry name" value="PROTEIN-METHIONINE-SULFOXIDE REDUCTASE HEME-BINDING SUBUNIT MSRQ"/>
    <property type="match status" value="1"/>
</dbReference>
<dbReference type="PANTHER" id="PTHR36964:SF1">
    <property type="entry name" value="PROTEIN-METHIONINE-SULFOXIDE REDUCTASE HEME-BINDING SUBUNIT MSRQ"/>
    <property type="match status" value="1"/>
</dbReference>
<dbReference type="Pfam" id="PF01794">
    <property type="entry name" value="Ferric_reduct"/>
    <property type="match status" value="1"/>
</dbReference>
<reference key="1">
    <citation type="journal article" date="2005" name="Jpn. Agric. Res. Q.">
        <title>Genome sequence of Xanthomonas oryzae pv. oryzae suggests contribution of large numbers of effector genes and insertion sequences to its race diversity.</title>
        <authorList>
            <person name="Ochiai H."/>
            <person name="Inoue Y."/>
            <person name="Takeya M."/>
            <person name="Sasaki A."/>
            <person name="Kaku H."/>
        </authorList>
    </citation>
    <scope>NUCLEOTIDE SEQUENCE [LARGE SCALE GENOMIC DNA]</scope>
    <source>
        <strain>MAFF 311018</strain>
    </source>
</reference>
<proteinExistence type="inferred from homology"/>
<feature type="chain" id="PRO_1000066191" description="Protein-methionine-sulfoxide reductase heme-binding subunit MsrQ">
    <location>
        <begin position="1"/>
        <end position="218"/>
    </location>
</feature>
<feature type="transmembrane region" description="Helical" evidence="1">
    <location>
        <begin position="8"/>
        <end position="28"/>
    </location>
</feature>
<feature type="transmembrane region" description="Helical" evidence="1">
    <location>
        <begin position="60"/>
        <end position="80"/>
    </location>
</feature>
<feature type="transmembrane region" description="Helical" evidence="1">
    <location>
        <begin position="86"/>
        <end position="106"/>
    </location>
</feature>
<feature type="transmembrane region" description="Helical" evidence="1">
    <location>
        <begin position="121"/>
        <end position="141"/>
    </location>
</feature>
<feature type="transmembrane region" description="Helical" evidence="1">
    <location>
        <begin position="155"/>
        <end position="175"/>
    </location>
</feature>
<accession>Q2P352</accession>
<gene>
    <name evidence="1" type="primary">msrQ</name>
    <name type="ordered locus">XOO2270</name>
</gene>
<comment type="function">
    <text evidence="1">Part of the MsrPQ system that repairs oxidized periplasmic proteins containing methionine sulfoxide residues (Met-O), using respiratory chain electrons. Thus protects these proteins from oxidative-stress damage caused by reactive species of oxygen and chlorine generated by the host defense mechanisms. MsrPQ is essential for the maintenance of envelope integrity under bleach stress, rescuing a wide series of structurally unrelated periplasmic proteins from methionine oxidation. MsrQ provides electrons for reduction to the reductase catalytic subunit MsrP, using the quinone pool of the respiratory chain.</text>
</comment>
<comment type="cofactor">
    <cofactor evidence="1">
        <name>FMN</name>
        <dbReference type="ChEBI" id="CHEBI:58210"/>
    </cofactor>
    <text evidence="1">Binds 1 FMN per subunit.</text>
</comment>
<comment type="cofactor">
    <cofactor evidence="1">
        <name>heme b</name>
        <dbReference type="ChEBI" id="CHEBI:60344"/>
    </cofactor>
    <text evidence="1">Binds 1 heme b (iron(II)-protoporphyrin IX) group per subunit.</text>
</comment>
<comment type="subunit">
    <text evidence="1">Heterodimer of a catalytic subunit (MsrP) and a heme-binding subunit (MsrQ).</text>
</comment>
<comment type="subcellular location">
    <subcellularLocation>
        <location evidence="1">Cell inner membrane</location>
        <topology evidence="1">Multi-pass membrane protein</topology>
    </subcellularLocation>
</comment>
<comment type="similarity">
    <text evidence="1">Belongs to the MsrQ family.</text>
</comment>
<evidence type="ECO:0000255" key="1">
    <source>
        <dbReference type="HAMAP-Rule" id="MF_01207"/>
    </source>
</evidence>
<organism>
    <name type="scientific">Xanthomonas oryzae pv. oryzae (strain MAFF 311018)</name>
    <dbReference type="NCBI Taxonomy" id="342109"/>
    <lineage>
        <taxon>Bacteria</taxon>
        <taxon>Pseudomonadati</taxon>
        <taxon>Pseudomonadota</taxon>
        <taxon>Gammaproteobacteria</taxon>
        <taxon>Lysobacterales</taxon>
        <taxon>Lysobacteraceae</taxon>
        <taxon>Xanthomonas</taxon>
    </lineage>
</organism>